<keyword id="KW-0963">Cytoplasm</keyword>
<keyword id="KW-0255">Endonuclease</keyword>
<keyword id="KW-0378">Hydrolase</keyword>
<keyword id="KW-0479">Metal-binding</keyword>
<keyword id="KW-0540">Nuclease</keyword>
<keyword id="KW-1185">Reference proteome</keyword>
<keyword id="KW-0690">Ribosome biogenesis</keyword>
<keyword id="KW-0698">rRNA processing</keyword>
<keyword id="KW-0862">Zinc</keyword>
<comment type="function">
    <text evidence="1">Single strand-specific metallo-endoribonuclease involved in late-stage 70S ribosome quality control and in maturation of the 3' terminus of the 16S rRNA.</text>
</comment>
<comment type="cofactor">
    <cofactor evidence="1">
        <name>Zn(2+)</name>
        <dbReference type="ChEBI" id="CHEBI:29105"/>
    </cofactor>
    <text evidence="1">Binds 1 zinc ion.</text>
</comment>
<comment type="subcellular location">
    <subcellularLocation>
        <location evidence="1">Cytoplasm</location>
    </subcellularLocation>
</comment>
<comment type="similarity">
    <text evidence="1">Belongs to the endoribonuclease YbeY family.</text>
</comment>
<gene>
    <name evidence="1" type="primary">ybeY</name>
    <name type="ordered locus">P9211_02001</name>
</gene>
<sequence length="189" mass="21845">MLSASENRFEIDLDLVFHSYQDAHLINNIFFNNEALWRSNLKVWIDYVRRNDNYLCPAIVRSVNCLSIGLQFTDDKSIMKINQQWRAKEEPTDVLSFPVIDQDSIAPPPNHFLELGDIIVSVQTAQKQADENNHSLDKELCWLVSHGLLHLLGWDHLNEHSLDQMLSFQDKLLQINHDSQIAVSRGLQP</sequence>
<organism>
    <name type="scientific">Prochlorococcus marinus (strain MIT 9211)</name>
    <dbReference type="NCBI Taxonomy" id="93059"/>
    <lineage>
        <taxon>Bacteria</taxon>
        <taxon>Bacillati</taxon>
        <taxon>Cyanobacteriota</taxon>
        <taxon>Cyanophyceae</taxon>
        <taxon>Synechococcales</taxon>
        <taxon>Prochlorococcaceae</taxon>
        <taxon>Prochlorococcus</taxon>
    </lineage>
</organism>
<proteinExistence type="inferred from homology"/>
<dbReference type="EC" id="3.1.-.-" evidence="1"/>
<dbReference type="EMBL" id="CP000878">
    <property type="protein sequence ID" value="ABX08131.1"/>
    <property type="molecule type" value="Genomic_DNA"/>
</dbReference>
<dbReference type="RefSeq" id="WP_012194756.1">
    <property type="nucleotide sequence ID" value="NC_009976.1"/>
</dbReference>
<dbReference type="SMR" id="A9BD43"/>
<dbReference type="STRING" id="93059.P9211_02001"/>
<dbReference type="KEGG" id="pmj:P9211_02001"/>
<dbReference type="eggNOG" id="COG0319">
    <property type="taxonomic scope" value="Bacteria"/>
</dbReference>
<dbReference type="HOGENOM" id="CLU_106710_3_0_3"/>
<dbReference type="OrthoDB" id="9807740at2"/>
<dbReference type="Proteomes" id="UP000000788">
    <property type="component" value="Chromosome"/>
</dbReference>
<dbReference type="GO" id="GO:0005737">
    <property type="term" value="C:cytoplasm"/>
    <property type="evidence" value="ECO:0007669"/>
    <property type="project" value="UniProtKB-SubCell"/>
</dbReference>
<dbReference type="GO" id="GO:0004222">
    <property type="term" value="F:metalloendopeptidase activity"/>
    <property type="evidence" value="ECO:0007669"/>
    <property type="project" value="InterPro"/>
</dbReference>
<dbReference type="GO" id="GO:0004521">
    <property type="term" value="F:RNA endonuclease activity"/>
    <property type="evidence" value="ECO:0007669"/>
    <property type="project" value="UniProtKB-UniRule"/>
</dbReference>
<dbReference type="GO" id="GO:0008270">
    <property type="term" value="F:zinc ion binding"/>
    <property type="evidence" value="ECO:0007669"/>
    <property type="project" value="UniProtKB-UniRule"/>
</dbReference>
<dbReference type="GO" id="GO:0006364">
    <property type="term" value="P:rRNA processing"/>
    <property type="evidence" value="ECO:0007669"/>
    <property type="project" value="UniProtKB-UniRule"/>
</dbReference>
<dbReference type="Gene3D" id="3.40.390.30">
    <property type="entry name" value="Metalloproteases ('zincins'), catalytic domain"/>
    <property type="match status" value="1"/>
</dbReference>
<dbReference type="HAMAP" id="MF_00009">
    <property type="entry name" value="Endoribonucl_YbeY"/>
    <property type="match status" value="1"/>
</dbReference>
<dbReference type="InterPro" id="IPR023091">
    <property type="entry name" value="MetalPrtase_cat_dom_sf_prd"/>
</dbReference>
<dbReference type="InterPro" id="IPR002036">
    <property type="entry name" value="YbeY"/>
</dbReference>
<dbReference type="InterPro" id="IPR020549">
    <property type="entry name" value="YbeY_CS"/>
</dbReference>
<dbReference type="NCBIfam" id="TIGR00043">
    <property type="entry name" value="rRNA maturation RNase YbeY"/>
    <property type="match status" value="1"/>
</dbReference>
<dbReference type="PANTHER" id="PTHR46986">
    <property type="entry name" value="ENDORIBONUCLEASE YBEY, CHLOROPLASTIC"/>
    <property type="match status" value="1"/>
</dbReference>
<dbReference type="PANTHER" id="PTHR46986:SF1">
    <property type="entry name" value="ENDORIBONUCLEASE YBEY, CHLOROPLASTIC"/>
    <property type="match status" value="1"/>
</dbReference>
<dbReference type="Pfam" id="PF02130">
    <property type="entry name" value="YbeY"/>
    <property type="match status" value="1"/>
</dbReference>
<dbReference type="SUPFAM" id="SSF55486">
    <property type="entry name" value="Metalloproteases ('zincins'), catalytic domain"/>
    <property type="match status" value="1"/>
</dbReference>
<dbReference type="PROSITE" id="PS01306">
    <property type="entry name" value="UPF0054"/>
    <property type="match status" value="1"/>
</dbReference>
<name>YBEY_PROM4</name>
<reference key="1">
    <citation type="journal article" date="2007" name="PLoS Genet.">
        <title>Patterns and implications of gene gain and loss in the evolution of Prochlorococcus.</title>
        <authorList>
            <person name="Kettler G.C."/>
            <person name="Martiny A.C."/>
            <person name="Huang K."/>
            <person name="Zucker J."/>
            <person name="Coleman M.L."/>
            <person name="Rodrigue S."/>
            <person name="Chen F."/>
            <person name="Lapidus A."/>
            <person name="Ferriera S."/>
            <person name="Johnson J."/>
            <person name="Steglich C."/>
            <person name="Church G.M."/>
            <person name="Richardson P."/>
            <person name="Chisholm S.W."/>
        </authorList>
    </citation>
    <scope>NUCLEOTIDE SEQUENCE [LARGE SCALE GENOMIC DNA]</scope>
    <source>
        <strain>MIT 9211</strain>
    </source>
</reference>
<evidence type="ECO:0000255" key="1">
    <source>
        <dbReference type="HAMAP-Rule" id="MF_00009"/>
    </source>
</evidence>
<feature type="chain" id="PRO_1000089196" description="Endoribonuclease YbeY">
    <location>
        <begin position="1"/>
        <end position="189"/>
    </location>
</feature>
<feature type="binding site" evidence="1">
    <location>
        <position position="146"/>
    </location>
    <ligand>
        <name>Zn(2+)</name>
        <dbReference type="ChEBI" id="CHEBI:29105"/>
        <note>catalytic</note>
    </ligand>
</feature>
<feature type="binding site" evidence="1">
    <location>
        <position position="150"/>
    </location>
    <ligand>
        <name>Zn(2+)</name>
        <dbReference type="ChEBI" id="CHEBI:29105"/>
        <note>catalytic</note>
    </ligand>
</feature>
<feature type="binding site" evidence="1">
    <location>
        <position position="156"/>
    </location>
    <ligand>
        <name>Zn(2+)</name>
        <dbReference type="ChEBI" id="CHEBI:29105"/>
        <note>catalytic</note>
    </ligand>
</feature>
<accession>A9BD43</accession>
<protein>
    <recommendedName>
        <fullName evidence="1">Endoribonuclease YbeY</fullName>
        <ecNumber evidence="1">3.1.-.-</ecNumber>
    </recommendedName>
</protein>